<gene>
    <name evidence="1" type="primary">trpB</name>
    <name type="ordered locus">SCH_1722</name>
</gene>
<protein>
    <recommendedName>
        <fullName evidence="1">Tryptophan synthase beta chain</fullName>
        <ecNumber evidence="1">4.2.1.20</ecNumber>
    </recommendedName>
</protein>
<accession>Q57NT3</accession>
<comment type="function">
    <text evidence="1">The beta subunit is responsible for the synthesis of L-tryptophan from indole and L-serine.</text>
</comment>
<comment type="catalytic activity">
    <reaction evidence="1">
        <text>(1S,2R)-1-C-(indol-3-yl)glycerol 3-phosphate + L-serine = D-glyceraldehyde 3-phosphate + L-tryptophan + H2O</text>
        <dbReference type="Rhea" id="RHEA:10532"/>
        <dbReference type="ChEBI" id="CHEBI:15377"/>
        <dbReference type="ChEBI" id="CHEBI:33384"/>
        <dbReference type="ChEBI" id="CHEBI:57912"/>
        <dbReference type="ChEBI" id="CHEBI:58866"/>
        <dbReference type="ChEBI" id="CHEBI:59776"/>
        <dbReference type="EC" id="4.2.1.20"/>
    </reaction>
</comment>
<comment type="cofactor">
    <cofactor evidence="1">
        <name>pyridoxal 5'-phosphate</name>
        <dbReference type="ChEBI" id="CHEBI:597326"/>
    </cofactor>
</comment>
<comment type="pathway">
    <text evidence="1">Amino-acid biosynthesis; L-tryptophan biosynthesis; L-tryptophan from chorismate: step 5/5.</text>
</comment>
<comment type="subunit">
    <text evidence="1">Tetramer of two alpha and two beta chains.</text>
</comment>
<comment type="similarity">
    <text evidence="1">Belongs to the TrpB family.</text>
</comment>
<feature type="chain" id="PRO_1000018383" description="Tryptophan synthase beta chain">
    <location>
        <begin position="1"/>
        <end position="397"/>
    </location>
</feature>
<feature type="modified residue" description="N6-(pyridoxal phosphate)lysine" evidence="1">
    <location>
        <position position="87"/>
    </location>
</feature>
<reference key="1">
    <citation type="journal article" date="2005" name="Nucleic Acids Res.">
        <title>The genome sequence of Salmonella enterica serovar Choleraesuis, a highly invasive and resistant zoonotic pathogen.</title>
        <authorList>
            <person name="Chiu C.-H."/>
            <person name="Tang P."/>
            <person name="Chu C."/>
            <person name="Hu S."/>
            <person name="Bao Q."/>
            <person name="Yu J."/>
            <person name="Chou Y.-Y."/>
            <person name="Wang H.-S."/>
            <person name="Lee Y.-S."/>
        </authorList>
    </citation>
    <scope>NUCLEOTIDE SEQUENCE [LARGE SCALE GENOMIC DNA]</scope>
    <source>
        <strain>SC-B67</strain>
    </source>
</reference>
<evidence type="ECO:0000255" key="1">
    <source>
        <dbReference type="HAMAP-Rule" id="MF_00133"/>
    </source>
</evidence>
<keyword id="KW-0028">Amino-acid biosynthesis</keyword>
<keyword id="KW-0057">Aromatic amino acid biosynthesis</keyword>
<keyword id="KW-0456">Lyase</keyword>
<keyword id="KW-0663">Pyridoxal phosphate</keyword>
<keyword id="KW-0822">Tryptophan biosynthesis</keyword>
<proteinExistence type="inferred from homology"/>
<name>TRPB_SALCH</name>
<sequence length="397" mass="42867">MTTLLNPYFGEFGGMYVPQILMPALNQLEEAFVSAQKDPEFQAQFADLLKNYAGRPTALTKCQNITAGTRTTLYLKREDLLHGGAHKTNQVLGQALLAKRMGKSEIIAETGAGQHGVASALASALLGLKCRIYMGAKDVERQSPNVFRMRLMGAEVIPVHSGSATLKDACNEALRDWSGSYETAHYMLGTAAGPHPYPTIVREFQRMIGEETKAQILDKEGRLPDAVIACVGGGSNAIGMFADFINDTSVGLIGVEPGGHGIETGKHGAPLKHGRVGIYFGMKAPMMQTADGQIEESYSISAGLDFPSVGPQHAYLNSIGRADYVSITDDEALEAFKTLCRHEGIIPALESSHALAHALKMMREQPEKEQLLVVNLSGRGDKDIFTVHDILKARGEI</sequence>
<dbReference type="EC" id="4.2.1.20" evidence="1"/>
<dbReference type="EMBL" id="AE017220">
    <property type="protein sequence ID" value="AAX65628.1"/>
    <property type="molecule type" value="Genomic_DNA"/>
</dbReference>
<dbReference type="RefSeq" id="WP_001540163.1">
    <property type="nucleotide sequence ID" value="NC_006905.1"/>
</dbReference>
<dbReference type="SMR" id="Q57NT3"/>
<dbReference type="KEGG" id="sec:SCH_1722"/>
<dbReference type="HOGENOM" id="CLU_016734_3_1_6"/>
<dbReference type="UniPathway" id="UPA00035">
    <property type="reaction ID" value="UER00044"/>
</dbReference>
<dbReference type="Proteomes" id="UP000000538">
    <property type="component" value="Chromosome"/>
</dbReference>
<dbReference type="GO" id="GO:0005737">
    <property type="term" value="C:cytoplasm"/>
    <property type="evidence" value="ECO:0007669"/>
    <property type="project" value="TreeGrafter"/>
</dbReference>
<dbReference type="GO" id="GO:0004834">
    <property type="term" value="F:tryptophan synthase activity"/>
    <property type="evidence" value="ECO:0007669"/>
    <property type="project" value="UniProtKB-UniRule"/>
</dbReference>
<dbReference type="CDD" id="cd06446">
    <property type="entry name" value="Trp-synth_B"/>
    <property type="match status" value="1"/>
</dbReference>
<dbReference type="FunFam" id="3.40.50.1100:FF:000001">
    <property type="entry name" value="Tryptophan synthase beta chain"/>
    <property type="match status" value="1"/>
</dbReference>
<dbReference type="FunFam" id="3.40.50.1100:FF:000004">
    <property type="entry name" value="Tryptophan synthase beta chain"/>
    <property type="match status" value="1"/>
</dbReference>
<dbReference type="Gene3D" id="3.40.50.1100">
    <property type="match status" value="2"/>
</dbReference>
<dbReference type="HAMAP" id="MF_00133">
    <property type="entry name" value="Trp_synth_beta"/>
    <property type="match status" value="1"/>
</dbReference>
<dbReference type="InterPro" id="IPR006653">
    <property type="entry name" value="Trp_synth_b_CS"/>
</dbReference>
<dbReference type="InterPro" id="IPR006654">
    <property type="entry name" value="Trp_synth_beta"/>
</dbReference>
<dbReference type="InterPro" id="IPR023026">
    <property type="entry name" value="Trp_synth_beta/beta-like"/>
</dbReference>
<dbReference type="InterPro" id="IPR001926">
    <property type="entry name" value="TrpB-like_PALP"/>
</dbReference>
<dbReference type="InterPro" id="IPR036052">
    <property type="entry name" value="TrpB-like_PALP_sf"/>
</dbReference>
<dbReference type="NCBIfam" id="TIGR00263">
    <property type="entry name" value="trpB"/>
    <property type="match status" value="1"/>
</dbReference>
<dbReference type="PANTHER" id="PTHR48077:SF3">
    <property type="entry name" value="TRYPTOPHAN SYNTHASE"/>
    <property type="match status" value="1"/>
</dbReference>
<dbReference type="PANTHER" id="PTHR48077">
    <property type="entry name" value="TRYPTOPHAN SYNTHASE-RELATED"/>
    <property type="match status" value="1"/>
</dbReference>
<dbReference type="Pfam" id="PF00291">
    <property type="entry name" value="PALP"/>
    <property type="match status" value="1"/>
</dbReference>
<dbReference type="PIRSF" id="PIRSF001413">
    <property type="entry name" value="Trp_syn_beta"/>
    <property type="match status" value="1"/>
</dbReference>
<dbReference type="SUPFAM" id="SSF53686">
    <property type="entry name" value="Tryptophan synthase beta subunit-like PLP-dependent enzymes"/>
    <property type="match status" value="1"/>
</dbReference>
<dbReference type="PROSITE" id="PS00168">
    <property type="entry name" value="TRP_SYNTHASE_BETA"/>
    <property type="match status" value="1"/>
</dbReference>
<organism>
    <name type="scientific">Salmonella choleraesuis (strain SC-B67)</name>
    <dbReference type="NCBI Taxonomy" id="321314"/>
    <lineage>
        <taxon>Bacteria</taxon>
        <taxon>Pseudomonadati</taxon>
        <taxon>Pseudomonadota</taxon>
        <taxon>Gammaproteobacteria</taxon>
        <taxon>Enterobacterales</taxon>
        <taxon>Enterobacteriaceae</taxon>
        <taxon>Salmonella</taxon>
    </lineage>
</organism>